<accession>Q63H62</accession>
<comment type="function">
    <text evidence="1">ATP-binding (A) component of a common energy-coupling factor (ECF) ABC-transporter complex. Unlike classic ABC transporters this ECF transporter provides the energy necessary to transport a number of different substrates.</text>
</comment>
<comment type="subunit">
    <text evidence="1">Forms a stable energy-coupling factor (ECF) transporter complex composed of 2 membrane-embedded substrate-binding proteins (S component), 2 ATP-binding proteins (A component) and 2 transmembrane proteins (T component).</text>
</comment>
<comment type="subcellular location">
    <subcellularLocation>
        <location evidence="1">Cell membrane</location>
        <topology evidence="1">Peripheral membrane protein</topology>
    </subcellularLocation>
</comment>
<comment type="similarity">
    <text evidence="1">Belongs to the ABC transporter superfamily. Energy-coupling factor EcfA family.</text>
</comment>
<comment type="sequence caution" evidence="2">
    <conflict type="erroneous initiation">
        <sequence resource="EMBL-CDS" id="AAU20099"/>
    </conflict>
    <text>Extended N-terminus.</text>
</comment>
<proteinExistence type="inferred from homology"/>
<sequence>MKKEKLRTENISFQYPGAATYALKDVSFSLFEGEWVSVIGQNGSGKSTLAKLLNGLFLPEAGTITVNDTMILSEETVWDVRKQIGMVFQNPDNQFVGTTVQDDVVFGLENIGMPREQMVERLNQALRLVRMEDFLNDEPHSLSGGQKQRVAIAGVLALQPSILILDEATSMLDPQGRREVVETVRQLVNEKGITVLSITHDLEEAAQSDRVIILNKGEILEEGIPEQIFKSSHMLQEIGLDVPFSVKIAELLKRNEILLQNTHLTMESLVNELWRLHSKK</sequence>
<gene>
    <name evidence="1" type="primary">ecfA1</name>
    <name type="synonym">cbiO1</name>
    <name type="ordered locus">BCE33L0132</name>
</gene>
<feature type="chain" id="PRO_0000287921" description="Energy-coupling factor transporter ATP-binding protein EcfA1">
    <location>
        <begin position="1"/>
        <end position="280"/>
    </location>
</feature>
<feature type="domain" description="ABC transporter" evidence="1">
    <location>
        <begin position="6"/>
        <end position="241"/>
    </location>
</feature>
<feature type="binding site" evidence="1">
    <location>
        <begin position="40"/>
        <end position="47"/>
    </location>
    <ligand>
        <name>ATP</name>
        <dbReference type="ChEBI" id="CHEBI:30616"/>
    </ligand>
</feature>
<keyword id="KW-0067">ATP-binding</keyword>
<keyword id="KW-1003">Cell membrane</keyword>
<keyword id="KW-0472">Membrane</keyword>
<keyword id="KW-0547">Nucleotide-binding</keyword>
<keyword id="KW-1278">Translocase</keyword>
<keyword id="KW-0813">Transport</keyword>
<evidence type="ECO:0000255" key="1">
    <source>
        <dbReference type="HAMAP-Rule" id="MF_01710"/>
    </source>
</evidence>
<evidence type="ECO:0000305" key="2"/>
<dbReference type="EC" id="7.-.-.-" evidence="1"/>
<dbReference type="EMBL" id="CP000001">
    <property type="protein sequence ID" value="AAU20099.1"/>
    <property type="status" value="ALT_INIT"/>
    <property type="molecule type" value="Genomic_DNA"/>
</dbReference>
<dbReference type="RefSeq" id="WP_000711774.1">
    <property type="nucleotide sequence ID" value="NC_006274.1"/>
</dbReference>
<dbReference type="SMR" id="Q63H62"/>
<dbReference type="KEGG" id="bcz:BCE33L0132"/>
<dbReference type="PATRIC" id="fig|288681.22.peg.18"/>
<dbReference type="Proteomes" id="UP000002612">
    <property type="component" value="Chromosome"/>
</dbReference>
<dbReference type="GO" id="GO:0043190">
    <property type="term" value="C:ATP-binding cassette (ABC) transporter complex"/>
    <property type="evidence" value="ECO:0007669"/>
    <property type="project" value="TreeGrafter"/>
</dbReference>
<dbReference type="GO" id="GO:0005524">
    <property type="term" value="F:ATP binding"/>
    <property type="evidence" value="ECO:0007669"/>
    <property type="project" value="UniProtKB-KW"/>
</dbReference>
<dbReference type="GO" id="GO:0016887">
    <property type="term" value="F:ATP hydrolysis activity"/>
    <property type="evidence" value="ECO:0007669"/>
    <property type="project" value="InterPro"/>
</dbReference>
<dbReference type="GO" id="GO:0042626">
    <property type="term" value="F:ATPase-coupled transmembrane transporter activity"/>
    <property type="evidence" value="ECO:0007669"/>
    <property type="project" value="TreeGrafter"/>
</dbReference>
<dbReference type="CDD" id="cd03225">
    <property type="entry name" value="ABC_cobalt_CbiO_domain1"/>
    <property type="match status" value="1"/>
</dbReference>
<dbReference type="FunFam" id="3.40.50.300:FF:000224">
    <property type="entry name" value="Energy-coupling factor transporter ATP-binding protein EcfA"/>
    <property type="match status" value="1"/>
</dbReference>
<dbReference type="Gene3D" id="3.40.50.300">
    <property type="entry name" value="P-loop containing nucleotide triphosphate hydrolases"/>
    <property type="match status" value="1"/>
</dbReference>
<dbReference type="InterPro" id="IPR003593">
    <property type="entry name" value="AAA+_ATPase"/>
</dbReference>
<dbReference type="InterPro" id="IPR003439">
    <property type="entry name" value="ABC_transporter-like_ATP-bd"/>
</dbReference>
<dbReference type="InterPro" id="IPR017871">
    <property type="entry name" value="ABC_transporter-like_CS"/>
</dbReference>
<dbReference type="InterPro" id="IPR015856">
    <property type="entry name" value="ABC_transpr_CbiO/EcfA_su"/>
</dbReference>
<dbReference type="InterPro" id="IPR050095">
    <property type="entry name" value="ECF_ABC_transporter_ATP-bd"/>
</dbReference>
<dbReference type="InterPro" id="IPR030947">
    <property type="entry name" value="EcfA_1"/>
</dbReference>
<dbReference type="InterPro" id="IPR027417">
    <property type="entry name" value="P-loop_NTPase"/>
</dbReference>
<dbReference type="NCBIfam" id="TIGR04520">
    <property type="entry name" value="ECF_ATPase_1"/>
    <property type="match status" value="1"/>
</dbReference>
<dbReference type="NCBIfam" id="NF010156">
    <property type="entry name" value="PRK13635.1"/>
    <property type="match status" value="1"/>
</dbReference>
<dbReference type="NCBIfam" id="NF010167">
    <property type="entry name" value="PRK13648.1"/>
    <property type="match status" value="1"/>
</dbReference>
<dbReference type="PANTHER" id="PTHR43553:SF24">
    <property type="entry name" value="ENERGY-COUPLING FACTOR TRANSPORTER ATP-BINDING PROTEIN ECFA1"/>
    <property type="match status" value="1"/>
</dbReference>
<dbReference type="PANTHER" id="PTHR43553">
    <property type="entry name" value="HEAVY METAL TRANSPORTER"/>
    <property type="match status" value="1"/>
</dbReference>
<dbReference type="Pfam" id="PF00005">
    <property type="entry name" value="ABC_tran"/>
    <property type="match status" value="1"/>
</dbReference>
<dbReference type="SMART" id="SM00382">
    <property type="entry name" value="AAA"/>
    <property type="match status" value="1"/>
</dbReference>
<dbReference type="SUPFAM" id="SSF52540">
    <property type="entry name" value="P-loop containing nucleoside triphosphate hydrolases"/>
    <property type="match status" value="1"/>
</dbReference>
<dbReference type="PROSITE" id="PS00211">
    <property type="entry name" value="ABC_TRANSPORTER_1"/>
    <property type="match status" value="1"/>
</dbReference>
<dbReference type="PROSITE" id="PS50893">
    <property type="entry name" value="ABC_TRANSPORTER_2"/>
    <property type="match status" value="1"/>
</dbReference>
<dbReference type="PROSITE" id="PS51246">
    <property type="entry name" value="CBIO"/>
    <property type="match status" value="1"/>
</dbReference>
<protein>
    <recommendedName>
        <fullName evidence="1">Energy-coupling factor transporter ATP-binding protein EcfA1</fullName>
        <shortName evidence="1">ECF transporter A component EcfA1</shortName>
        <ecNumber evidence="1">7.-.-.-</ecNumber>
    </recommendedName>
</protein>
<organism>
    <name type="scientific">Bacillus cereus (strain ZK / E33L)</name>
    <dbReference type="NCBI Taxonomy" id="288681"/>
    <lineage>
        <taxon>Bacteria</taxon>
        <taxon>Bacillati</taxon>
        <taxon>Bacillota</taxon>
        <taxon>Bacilli</taxon>
        <taxon>Bacillales</taxon>
        <taxon>Bacillaceae</taxon>
        <taxon>Bacillus</taxon>
        <taxon>Bacillus cereus group</taxon>
    </lineage>
</organism>
<name>ECFA1_BACCZ</name>
<reference key="1">
    <citation type="journal article" date="2006" name="J. Bacteriol.">
        <title>Pathogenomic sequence analysis of Bacillus cereus and Bacillus thuringiensis isolates closely related to Bacillus anthracis.</title>
        <authorList>
            <person name="Han C.S."/>
            <person name="Xie G."/>
            <person name="Challacombe J.F."/>
            <person name="Altherr M.R."/>
            <person name="Bhotika S.S."/>
            <person name="Bruce D."/>
            <person name="Campbell C.S."/>
            <person name="Campbell M.L."/>
            <person name="Chen J."/>
            <person name="Chertkov O."/>
            <person name="Cleland C."/>
            <person name="Dimitrijevic M."/>
            <person name="Doggett N.A."/>
            <person name="Fawcett J.J."/>
            <person name="Glavina T."/>
            <person name="Goodwin L.A."/>
            <person name="Hill K.K."/>
            <person name="Hitchcock P."/>
            <person name="Jackson P.J."/>
            <person name="Keim P."/>
            <person name="Kewalramani A.R."/>
            <person name="Longmire J."/>
            <person name="Lucas S."/>
            <person name="Malfatti S."/>
            <person name="McMurry K."/>
            <person name="Meincke L.J."/>
            <person name="Misra M."/>
            <person name="Moseman B.L."/>
            <person name="Mundt M."/>
            <person name="Munk A.C."/>
            <person name="Okinaka R.T."/>
            <person name="Parson-Quintana B."/>
            <person name="Reilly L.P."/>
            <person name="Richardson P."/>
            <person name="Robinson D.L."/>
            <person name="Rubin E."/>
            <person name="Saunders E."/>
            <person name="Tapia R."/>
            <person name="Tesmer J.G."/>
            <person name="Thayer N."/>
            <person name="Thompson L.S."/>
            <person name="Tice H."/>
            <person name="Ticknor L.O."/>
            <person name="Wills P.L."/>
            <person name="Brettin T.S."/>
            <person name="Gilna P."/>
        </authorList>
    </citation>
    <scope>NUCLEOTIDE SEQUENCE [LARGE SCALE GENOMIC DNA]</scope>
    <source>
        <strain>ZK / E33L</strain>
    </source>
</reference>